<gene>
    <name evidence="1" type="primary">yjjB</name>
    <name type="ordered locus">PC1_3642</name>
</gene>
<reference key="1">
    <citation type="submission" date="2009-07" db="EMBL/GenBank/DDBJ databases">
        <title>Complete sequence of Pectobacterium carotovorum subsp. carotovorum PC1.</title>
        <authorList>
            <consortium name="US DOE Joint Genome Institute"/>
            <person name="Lucas S."/>
            <person name="Copeland A."/>
            <person name="Lapidus A."/>
            <person name="Glavina del Rio T."/>
            <person name="Tice H."/>
            <person name="Bruce D."/>
            <person name="Goodwin L."/>
            <person name="Pitluck S."/>
            <person name="Munk A.C."/>
            <person name="Brettin T."/>
            <person name="Detter J.C."/>
            <person name="Han C."/>
            <person name="Tapia R."/>
            <person name="Larimer F."/>
            <person name="Land M."/>
            <person name="Hauser L."/>
            <person name="Kyrpides N."/>
            <person name="Mikhailova N."/>
            <person name="Balakrishnan V."/>
            <person name="Glasner J."/>
            <person name="Perna N.T."/>
        </authorList>
    </citation>
    <scope>NUCLEOTIDE SEQUENCE [LARGE SCALE GENOMIC DNA]</scope>
    <source>
        <strain>PC1</strain>
    </source>
</reference>
<feature type="chain" id="PRO_1000213794" description="Probable succinate transporter subunit YjjB">
    <location>
        <begin position="1"/>
        <end position="156"/>
    </location>
</feature>
<feature type="transmembrane region" description="Helical" evidence="1">
    <location>
        <begin position="7"/>
        <end position="27"/>
    </location>
</feature>
<feature type="transmembrane region" description="Helical" evidence="1">
    <location>
        <begin position="54"/>
        <end position="74"/>
    </location>
</feature>
<feature type="transmembrane region" description="Helical" evidence="1">
    <location>
        <begin position="86"/>
        <end position="106"/>
    </location>
</feature>
<feature type="transmembrane region" description="Helical" evidence="1">
    <location>
        <begin position="128"/>
        <end position="148"/>
    </location>
</feature>
<comment type="function">
    <text evidence="1">Involved in succinate export with YjjP. Both proteins are required for export.</text>
</comment>
<comment type="subunit">
    <text evidence="1">The transporter is composed of YjjB and YjjP.</text>
</comment>
<comment type="subcellular location">
    <subcellularLocation>
        <location evidence="1">Cell inner membrane</location>
        <topology evidence="1">Multi-pass membrane protein</topology>
    </subcellularLocation>
</comment>
<comment type="similarity">
    <text evidence="1">Belongs to the ThrE exporter (TC 2.A.79) family.</text>
</comment>
<sequence>MGLSLLWALLQDMALAAVPALGFAMVFNVPLKVLPYCALLGGVGHGVRFLAMHFGMNIEWASFLAAILIGIIGIRWSRWLLAHPKVFTVAAVIPMFPGISAYTAMISVVEISHLGYSEALMSVMITNFLKASFIVGALSIGLSLPGIWLYRKRPGV</sequence>
<keyword id="KW-0997">Cell inner membrane</keyword>
<keyword id="KW-1003">Cell membrane</keyword>
<keyword id="KW-0472">Membrane</keyword>
<keyword id="KW-0812">Transmembrane</keyword>
<keyword id="KW-1133">Transmembrane helix</keyword>
<keyword id="KW-0813">Transport</keyword>
<dbReference type="EMBL" id="CP001657">
    <property type="protein sequence ID" value="ACT14657.1"/>
    <property type="molecule type" value="Genomic_DNA"/>
</dbReference>
<dbReference type="RefSeq" id="WP_015841773.1">
    <property type="nucleotide sequence ID" value="NC_012917.1"/>
</dbReference>
<dbReference type="STRING" id="561230.PC1_3642"/>
<dbReference type="KEGG" id="pct:PC1_3642"/>
<dbReference type="eggNOG" id="COG3610">
    <property type="taxonomic scope" value="Bacteria"/>
</dbReference>
<dbReference type="HOGENOM" id="CLU_117642_1_0_6"/>
<dbReference type="OrthoDB" id="9810047at2"/>
<dbReference type="Proteomes" id="UP000002736">
    <property type="component" value="Chromosome"/>
</dbReference>
<dbReference type="GO" id="GO:0005886">
    <property type="term" value="C:plasma membrane"/>
    <property type="evidence" value="ECO:0007669"/>
    <property type="project" value="UniProtKB-SubCell"/>
</dbReference>
<dbReference type="GO" id="GO:0015744">
    <property type="term" value="P:succinate transport"/>
    <property type="evidence" value="ECO:0007669"/>
    <property type="project" value="UniProtKB-UniRule"/>
</dbReference>
<dbReference type="HAMAP" id="MF_01191">
    <property type="entry name" value="YjjB"/>
    <property type="match status" value="1"/>
</dbReference>
<dbReference type="InterPro" id="IPR024528">
    <property type="entry name" value="ThrE_2"/>
</dbReference>
<dbReference type="InterPro" id="IPR050539">
    <property type="entry name" value="ThrE_Dicarb/AminoAcid_Exp"/>
</dbReference>
<dbReference type="InterPro" id="IPR020914">
    <property type="entry name" value="YjjB"/>
</dbReference>
<dbReference type="NCBIfam" id="NF007391">
    <property type="entry name" value="PRK09917.1"/>
    <property type="match status" value="1"/>
</dbReference>
<dbReference type="PANTHER" id="PTHR34390:SF1">
    <property type="entry name" value="SUCCINATE TRANSPORTER SUBUNIT YJJB-RELATED"/>
    <property type="match status" value="1"/>
</dbReference>
<dbReference type="PANTHER" id="PTHR34390">
    <property type="entry name" value="UPF0442 PROTEIN YJJB-RELATED"/>
    <property type="match status" value="1"/>
</dbReference>
<dbReference type="Pfam" id="PF12821">
    <property type="entry name" value="ThrE_2"/>
    <property type="match status" value="1"/>
</dbReference>
<evidence type="ECO:0000255" key="1">
    <source>
        <dbReference type="HAMAP-Rule" id="MF_01191"/>
    </source>
</evidence>
<name>YJJB_PECCP</name>
<protein>
    <recommendedName>
        <fullName evidence="1">Probable succinate transporter subunit YjjB</fullName>
    </recommendedName>
</protein>
<accession>C6DEZ3</accession>
<proteinExistence type="inferred from homology"/>
<organism>
    <name type="scientific">Pectobacterium carotovorum subsp. carotovorum (strain PC1)</name>
    <dbReference type="NCBI Taxonomy" id="561230"/>
    <lineage>
        <taxon>Bacteria</taxon>
        <taxon>Pseudomonadati</taxon>
        <taxon>Pseudomonadota</taxon>
        <taxon>Gammaproteobacteria</taxon>
        <taxon>Enterobacterales</taxon>
        <taxon>Pectobacteriaceae</taxon>
        <taxon>Pectobacterium</taxon>
    </lineage>
</organism>